<comment type="function">
    <text evidence="1">Bidirectionally degrades single-stranded DNA into large acid-insoluble oligonucleotides, which are then degraded further into small acid-soluble oligonucleotides.</text>
</comment>
<comment type="catalytic activity">
    <reaction evidence="1">
        <text>Exonucleolytic cleavage in either 5'- to 3'- or 3'- to 5'-direction to yield nucleoside 5'-phosphates.</text>
        <dbReference type="EC" id="3.1.11.6"/>
    </reaction>
</comment>
<comment type="subunit">
    <text evidence="1">Heterooligomer composed of large and small subunits.</text>
</comment>
<comment type="subcellular location">
    <subcellularLocation>
        <location evidence="1">Cytoplasm</location>
    </subcellularLocation>
</comment>
<comment type="similarity">
    <text evidence="1">Belongs to the XseB family.</text>
</comment>
<feature type="chain" id="PRO_1000019595" description="Exodeoxyribonuclease 7 small subunit">
    <location>
        <begin position="1"/>
        <end position="78"/>
    </location>
</feature>
<dbReference type="EC" id="3.1.11.6" evidence="1"/>
<dbReference type="EMBL" id="CP000239">
    <property type="protein sequence ID" value="ABD00119.1"/>
    <property type="molecule type" value="Genomic_DNA"/>
</dbReference>
<dbReference type="RefSeq" id="WP_011430793.1">
    <property type="nucleotide sequence ID" value="NC_007775.1"/>
</dbReference>
<dbReference type="SMR" id="Q2JT83"/>
<dbReference type="STRING" id="321327.CYA_1975"/>
<dbReference type="KEGG" id="cya:CYA_1975"/>
<dbReference type="eggNOG" id="COG1722">
    <property type="taxonomic scope" value="Bacteria"/>
</dbReference>
<dbReference type="HOGENOM" id="CLU_145918_1_0_3"/>
<dbReference type="OrthoDB" id="427334at2"/>
<dbReference type="Proteomes" id="UP000008818">
    <property type="component" value="Chromosome"/>
</dbReference>
<dbReference type="GO" id="GO:0005829">
    <property type="term" value="C:cytosol"/>
    <property type="evidence" value="ECO:0007669"/>
    <property type="project" value="TreeGrafter"/>
</dbReference>
<dbReference type="GO" id="GO:0009318">
    <property type="term" value="C:exodeoxyribonuclease VII complex"/>
    <property type="evidence" value="ECO:0007669"/>
    <property type="project" value="InterPro"/>
</dbReference>
<dbReference type="GO" id="GO:0008855">
    <property type="term" value="F:exodeoxyribonuclease VII activity"/>
    <property type="evidence" value="ECO:0007669"/>
    <property type="project" value="UniProtKB-UniRule"/>
</dbReference>
<dbReference type="GO" id="GO:0006308">
    <property type="term" value="P:DNA catabolic process"/>
    <property type="evidence" value="ECO:0007669"/>
    <property type="project" value="UniProtKB-UniRule"/>
</dbReference>
<dbReference type="Gene3D" id="1.10.287.1040">
    <property type="entry name" value="Exonuclease VII, small subunit"/>
    <property type="match status" value="1"/>
</dbReference>
<dbReference type="HAMAP" id="MF_00337">
    <property type="entry name" value="Exonuc_7_S"/>
    <property type="match status" value="1"/>
</dbReference>
<dbReference type="InterPro" id="IPR003761">
    <property type="entry name" value="Exonuc_VII_S"/>
</dbReference>
<dbReference type="InterPro" id="IPR037004">
    <property type="entry name" value="Exonuc_VII_ssu_sf"/>
</dbReference>
<dbReference type="NCBIfam" id="TIGR01280">
    <property type="entry name" value="xseB"/>
    <property type="match status" value="1"/>
</dbReference>
<dbReference type="PANTHER" id="PTHR34137">
    <property type="entry name" value="EXODEOXYRIBONUCLEASE 7 SMALL SUBUNIT"/>
    <property type="match status" value="1"/>
</dbReference>
<dbReference type="PANTHER" id="PTHR34137:SF1">
    <property type="entry name" value="EXODEOXYRIBONUCLEASE 7 SMALL SUBUNIT"/>
    <property type="match status" value="1"/>
</dbReference>
<dbReference type="Pfam" id="PF02609">
    <property type="entry name" value="Exonuc_VII_S"/>
    <property type="match status" value="1"/>
</dbReference>
<dbReference type="PIRSF" id="PIRSF006488">
    <property type="entry name" value="Exonuc_VII_S"/>
    <property type="match status" value="1"/>
</dbReference>
<dbReference type="SUPFAM" id="SSF116842">
    <property type="entry name" value="XseB-like"/>
    <property type="match status" value="1"/>
</dbReference>
<reference key="1">
    <citation type="journal article" date="2007" name="ISME J.">
        <title>Population level functional diversity in a microbial community revealed by comparative genomic and metagenomic analyses.</title>
        <authorList>
            <person name="Bhaya D."/>
            <person name="Grossman A.R."/>
            <person name="Steunou A.-S."/>
            <person name="Khuri N."/>
            <person name="Cohan F.M."/>
            <person name="Hamamura N."/>
            <person name="Melendrez M.C."/>
            <person name="Bateson M.M."/>
            <person name="Ward D.M."/>
            <person name="Heidelberg J.F."/>
        </authorList>
    </citation>
    <scope>NUCLEOTIDE SEQUENCE [LARGE SCALE GENOMIC DNA]</scope>
    <source>
        <strain>JA-3-3Ab</strain>
    </source>
</reference>
<evidence type="ECO:0000255" key="1">
    <source>
        <dbReference type="HAMAP-Rule" id="MF_00337"/>
    </source>
</evidence>
<gene>
    <name evidence="1" type="primary">xseB</name>
    <name type="ordered locus">CYA_1975</name>
</gene>
<protein>
    <recommendedName>
        <fullName evidence="1">Exodeoxyribonuclease 7 small subunit</fullName>
        <ecNumber evidence="1">3.1.11.6</ecNumber>
    </recommendedName>
    <alternativeName>
        <fullName evidence="1">Exodeoxyribonuclease VII small subunit</fullName>
        <shortName evidence="1">Exonuclease VII small subunit</shortName>
    </alternativeName>
</protein>
<sequence>MSRRKREDPWRYEAAIAEVESLIAQIESGELDLAEVVERFQQAAQTLKRCAEFLEEKRQQVEILIEELNQDDEDWQAF</sequence>
<name>EX7S_SYNJA</name>
<keyword id="KW-0963">Cytoplasm</keyword>
<keyword id="KW-0269">Exonuclease</keyword>
<keyword id="KW-0378">Hydrolase</keyword>
<keyword id="KW-0540">Nuclease</keyword>
<proteinExistence type="inferred from homology"/>
<organism>
    <name type="scientific">Synechococcus sp. (strain JA-3-3Ab)</name>
    <name type="common">Cyanobacteria bacterium Yellowstone A-Prime</name>
    <dbReference type="NCBI Taxonomy" id="321327"/>
    <lineage>
        <taxon>Bacteria</taxon>
        <taxon>Bacillati</taxon>
        <taxon>Cyanobacteriota</taxon>
        <taxon>Cyanophyceae</taxon>
        <taxon>Synechococcales</taxon>
        <taxon>Synechococcaceae</taxon>
        <taxon>Synechococcus</taxon>
    </lineage>
</organism>
<accession>Q2JT83</accession>